<keyword id="KW-0227">DNA damage</keyword>
<keyword id="KW-0233">DNA recombination</keyword>
<keyword id="KW-0234">DNA repair</keyword>
<protein>
    <recommendedName>
        <fullName evidence="1">DNA repair protein RecO</fullName>
    </recommendedName>
    <alternativeName>
        <fullName evidence="1">Recombination protein O</fullName>
    </alternativeName>
</protein>
<sequence length="242" mass="27363">MEGWQRAFVLHSRPWSETSLMLDVFTEESGRVRLVAKGARSKRSTLKGALQPFTPLLLRFGGRGEVKTLRSAEAVSLALPLSGITLYSGLYINELLSRVLEYETRFSELFFDYLHCIQSLAGATGTPEPALRRFELALLGHLGYGVNFTHCAGSGEPVDDTMTYRYREEKGFIASVVIDNKTFTGRQLKALNAREFPDADTLRAAKRFTRMALKPYLGGKPLKSRELFRQFMPKRTVKTHYE</sequence>
<feature type="chain" id="PRO_1000058565" description="DNA repair protein RecO">
    <location>
        <begin position="1"/>
        <end position="242"/>
    </location>
</feature>
<accession>A8A375</accession>
<gene>
    <name evidence="1" type="primary">recO</name>
    <name type="ordered locus">EcHS_A2720</name>
</gene>
<comment type="function">
    <text evidence="1">Involved in DNA repair and RecF pathway recombination.</text>
</comment>
<comment type="subunit">
    <text evidence="1">Monomer.</text>
</comment>
<comment type="similarity">
    <text evidence="1">Belongs to the RecO family.</text>
</comment>
<dbReference type="EMBL" id="CP000802">
    <property type="protein sequence ID" value="ABV06979.1"/>
    <property type="molecule type" value="Genomic_DNA"/>
</dbReference>
<dbReference type="RefSeq" id="WP_000399393.1">
    <property type="nucleotide sequence ID" value="NC_009800.1"/>
</dbReference>
<dbReference type="SMR" id="A8A375"/>
<dbReference type="GeneID" id="93774526"/>
<dbReference type="KEGG" id="ecx:EcHS_A2720"/>
<dbReference type="HOGENOM" id="CLU_066645_1_0_6"/>
<dbReference type="GO" id="GO:0043590">
    <property type="term" value="C:bacterial nucleoid"/>
    <property type="evidence" value="ECO:0007669"/>
    <property type="project" value="TreeGrafter"/>
</dbReference>
<dbReference type="GO" id="GO:0006310">
    <property type="term" value="P:DNA recombination"/>
    <property type="evidence" value="ECO:0007669"/>
    <property type="project" value="UniProtKB-UniRule"/>
</dbReference>
<dbReference type="GO" id="GO:0006302">
    <property type="term" value="P:double-strand break repair"/>
    <property type="evidence" value="ECO:0007669"/>
    <property type="project" value="TreeGrafter"/>
</dbReference>
<dbReference type="FunFam" id="1.20.1440.120:FF:000001">
    <property type="entry name" value="DNA repair protein RecO"/>
    <property type="match status" value="1"/>
</dbReference>
<dbReference type="FunFam" id="2.40.50.140:FF:000074">
    <property type="entry name" value="DNA repair protein RecO"/>
    <property type="match status" value="1"/>
</dbReference>
<dbReference type="Gene3D" id="2.40.50.140">
    <property type="entry name" value="Nucleic acid-binding proteins"/>
    <property type="match status" value="1"/>
</dbReference>
<dbReference type="Gene3D" id="1.20.1440.120">
    <property type="entry name" value="Recombination protein O, C-terminal domain"/>
    <property type="match status" value="1"/>
</dbReference>
<dbReference type="HAMAP" id="MF_00201">
    <property type="entry name" value="RecO"/>
    <property type="match status" value="1"/>
</dbReference>
<dbReference type="InterPro" id="IPR037278">
    <property type="entry name" value="ARFGAP/RecO"/>
</dbReference>
<dbReference type="InterPro" id="IPR022572">
    <property type="entry name" value="DNA_rep/recomb_RecO_N"/>
</dbReference>
<dbReference type="InterPro" id="IPR012340">
    <property type="entry name" value="NA-bd_OB-fold"/>
</dbReference>
<dbReference type="InterPro" id="IPR003717">
    <property type="entry name" value="RecO"/>
</dbReference>
<dbReference type="InterPro" id="IPR042242">
    <property type="entry name" value="RecO_C"/>
</dbReference>
<dbReference type="NCBIfam" id="TIGR00613">
    <property type="entry name" value="reco"/>
    <property type="match status" value="1"/>
</dbReference>
<dbReference type="PANTHER" id="PTHR33991">
    <property type="entry name" value="DNA REPAIR PROTEIN RECO"/>
    <property type="match status" value="1"/>
</dbReference>
<dbReference type="PANTHER" id="PTHR33991:SF1">
    <property type="entry name" value="DNA REPAIR PROTEIN RECO"/>
    <property type="match status" value="1"/>
</dbReference>
<dbReference type="Pfam" id="PF02565">
    <property type="entry name" value="RecO_C"/>
    <property type="match status" value="1"/>
</dbReference>
<dbReference type="Pfam" id="PF11967">
    <property type="entry name" value="RecO_N"/>
    <property type="match status" value="1"/>
</dbReference>
<dbReference type="SUPFAM" id="SSF57863">
    <property type="entry name" value="ArfGap/RecO-like zinc finger"/>
    <property type="match status" value="1"/>
</dbReference>
<dbReference type="SUPFAM" id="SSF50249">
    <property type="entry name" value="Nucleic acid-binding proteins"/>
    <property type="match status" value="1"/>
</dbReference>
<proteinExistence type="inferred from homology"/>
<reference key="1">
    <citation type="journal article" date="2008" name="J. Bacteriol.">
        <title>The pangenome structure of Escherichia coli: comparative genomic analysis of E. coli commensal and pathogenic isolates.</title>
        <authorList>
            <person name="Rasko D.A."/>
            <person name="Rosovitz M.J."/>
            <person name="Myers G.S.A."/>
            <person name="Mongodin E.F."/>
            <person name="Fricke W.F."/>
            <person name="Gajer P."/>
            <person name="Crabtree J."/>
            <person name="Sebaihia M."/>
            <person name="Thomson N.R."/>
            <person name="Chaudhuri R."/>
            <person name="Henderson I.R."/>
            <person name="Sperandio V."/>
            <person name="Ravel J."/>
        </authorList>
    </citation>
    <scope>NUCLEOTIDE SEQUENCE [LARGE SCALE GENOMIC DNA]</scope>
    <source>
        <strain>HS</strain>
    </source>
</reference>
<organism>
    <name type="scientific">Escherichia coli O9:H4 (strain HS)</name>
    <dbReference type="NCBI Taxonomy" id="331112"/>
    <lineage>
        <taxon>Bacteria</taxon>
        <taxon>Pseudomonadati</taxon>
        <taxon>Pseudomonadota</taxon>
        <taxon>Gammaproteobacteria</taxon>
        <taxon>Enterobacterales</taxon>
        <taxon>Enterobacteriaceae</taxon>
        <taxon>Escherichia</taxon>
    </lineage>
</organism>
<evidence type="ECO:0000255" key="1">
    <source>
        <dbReference type="HAMAP-Rule" id="MF_00201"/>
    </source>
</evidence>
<name>RECO_ECOHS</name>